<protein>
    <recommendedName>
        <fullName>KN motif and ankyrin repeat domain-containing protein 2</fullName>
    </recommendedName>
    <alternativeName>
        <fullName>Ankyrin repeat domain-containing protein 25</fullName>
    </alternativeName>
</protein>
<sequence length="843" mass="90245">MAQVLHVPAPFPGTPGQASPAAFPSKEPDPPYSVETPYGYRLDLDFLKYVDDIEKGHTLRRVAVQRRPRLGSLPRGPGSWWTSTESLCSDASGDSRHSAYSYCGRGFYPQYGALETRIGSNPRVERTLLDARRRLEDQAAAPSSGGLGSLTPSAAGSTSSLAGVGLLPPTPRSSGLSTPVAPSAGHLAHVREQMAGALRKLRQLEEQVKLIPVLQVKLSVLQEEKRQLTVQLKSQKFLGHPSGTRSRSELCLDLPEAPDDPAALETRSVGTWVRERDLGIPDGEAALVAKVAVLETQLKKALQELRAAQTQQVDLQPQAWPPPDTQVRVDTVRVVEGPREVEVAASTAAGALAQRAQSLEPYGTGLKALTTSGGPENTLVFRSHEVVETMCPLPTATTGNVHTAKKISITERSCTGAPRMTEPSSVNPRPAAASVVQPENPVPAAQDTTDKKPTRPAAASQDSQAADGAGRASLATKRKEDPADPEVNQRNLQFVGVNGGYESPSEDSSTAENSEHESTENEGPEPPARVLSPAECPQLRPPGAAVATTSLEGPQLSQESQRVPAPEVASGPDPEEEIRMDLSPDLISACLALEKYLENPNALTERELKVAYTTVLQEWLRLACRSDAHPELVRRHLVTFRAMSARLLDYVVNIADSNGNTALHYSVSHANFPVVRQLLDSGVCHVDKLNRAGYSPIMLTALATLKTQDDIETILQLFRLGNVNAKASQAGQTALMLAVSHGRVDVVRALLACEADVNIQDEDGSTALMCACEHGHKEITGLLLAVPSCDISLTDRDGSTALMVALDAGQSEIASMLYSRMNIKCSFAPMSDYESPASSSAEE</sequence>
<reference key="1">
    <citation type="journal article" date="2005" name="Science">
        <title>The transcriptional landscape of the mammalian genome.</title>
        <authorList>
            <person name="Carninci P."/>
            <person name="Kasukawa T."/>
            <person name="Katayama S."/>
            <person name="Gough J."/>
            <person name="Frith M.C."/>
            <person name="Maeda N."/>
            <person name="Oyama R."/>
            <person name="Ravasi T."/>
            <person name="Lenhard B."/>
            <person name="Wells C."/>
            <person name="Kodzius R."/>
            <person name="Shimokawa K."/>
            <person name="Bajic V.B."/>
            <person name="Brenner S.E."/>
            <person name="Batalov S."/>
            <person name="Forrest A.R."/>
            <person name="Zavolan M."/>
            <person name="Davis M.J."/>
            <person name="Wilming L.G."/>
            <person name="Aidinis V."/>
            <person name="Allen J.E."/>
            <person name="Ambesi-Impiombato A."/>
            <person name="Apweiler R."/>
            <person name="Aturaliya R.N."/>
            <person name="Bailey T.L."/>
            <person name="Bansal M."/>
            <person name="Baxter L."/>
            <person name="Beisel K.W."/>
            <person name="Bersano T."/>
            <person name="Bono H."/>
            <person name="Chalk A.M."/>
            <person name="Chiu K.P."/>
            <person name="Choudhary V."/>
            <person name="Christoffels A."/>
            <person name="Clutterbuck D.R."/>
            <person name="Crowe M.L."/>
            <person name="Dalla E."/>
            <person name="Dalrymple B.P."/>
            <person name="de Bono B."/>
            <person name="Della Gatta G."/>
            <person name="di Bernardo D."/>
            <person name="Down T."/>
            <person name="Engstrom P."/>
            <person name="Fagiolini M."/>
            <person name="Faulkner G."/>
            <person name="Fletcher C.F."/>
            <person name="Fukushima T."/>
            <person name="Furuno M."/>
            <person name="Futaki S."/>
            <person name="Gariboldi M."/>
            <person name="Georgii-Hemming P."/>
            <person name="Gingeras T.R."/>
            <person name="Gojobori T."/>
            <person name="Green R.E."/>
            <person name="Gustincich S."/>
            <person name="Harbers M."/>
            <person name="Hayashi Y."/>
            <person name="Hensch T.K."/>
            <person name="Hirokawa N."/>
            <person name="Hill D."/>
            <person name="Huminiecki L."/>
            <person name="Iacono M."/>
            <person name="Ikeo K."/>
            <person name="Iwama A."/>
            <person name="Ishikawa T."/>
            <person name="Jakt M."/>
            <person name="Kanapin A."/>
            <person name="Katoh M."/>
            <person name="Kawasawa Y."/>
            <person name="Kelso J."/>
            <person name="Kitamura H."/>
            <person name="Kitano H."/>
            <person name="Kollias G."/>
            <person name="Krishnan S.P."/>
            <person name="Kruger A."/>
            <person name="Kummerfeld S.K."/>
            <person name="Kurochkin I.V."/>
            <person name="Lareau L.F."/>
            <person name="Lazarevic D."/>
            <person name="Lipovich L."/>
            <person name="Liu J."/>
            <person name="Liuni S."/>
            <person name="McWilliam S."/>
            <person name="Madan Babu M."/>
            <person name="Madera M."/>
            <person name="Marchionni L."/>
            <person name="Matsuda H."/>
            <person name="Matsuzawa S."/>
            <person name="Miki H."/>
            <person name="Mignone F."/>
            <person name="Miyake S."/>
            <person name="Morris K."/>
            <person name="Mottagui-Tabar S."/>
            <person name="Mulder N."/>
            <person name="Nakano N."/>
            <person name="Nakauchi H."/>
            <person name="Ng P."/>
            <person name="Nilsson R."/>
            <person name="Nishiguchi S."/>
            <person name="Nishikawa S."/>
            <person name="Nori F."/>
            <person name="Ohara O."/>
            <person name="Okazaki Y."/>
            <person name="Orlando V."/>
            <person name="Pang K.C."/>
            <person name="Pavan W.J."/>
            <person name="Pavesi G."/>
            <person name="Pesole G."/>
            <person name="Petrovsky N."/>
            <person name="Piazza S."/>
            <person name="Reed J."/>
            <person name="Reid J.F."/>
            <person name="Ring B.Z."/>
            <person name="Ringwald M."/>
            <person name="Rost B."/>
            <person name="Ruan Y."/>
            <person name="Salzberg S.L."/>
            <person name="Sandelin A."/>
            <person name="Schneider C."/>
            <person name="Schoenbach C."/>
            <person name="Sekiguchi K."/>
            <person name="Semple C.A."/>
            <person name="Seno S."/>
            <person name="Sessa L."/>
            <person name="Sheng Y."/>
            <person name="Shibata Y."/>
            <person name="Shimada H."/>
            <person name="Shimada K."/>
            <person name="Silva D."/>
            <person name="Sinclair B."/>
            <person name="Sperling S."/>
            <person name="Stupka E."/>
            <person name="Sugiura K."/>
            <person name="Sultana R."/>
            <person name="Takenaka Y."/>
            <person name="Taki K."/>
            <person name="Tammoja K."/>
            <person name="Tan S.L."/>
            <person name="Tang S."/>
            <person name="Taylor M.S."/>
            <person name="Tegner J."/>
            <person name="Teichmann S.A."/>
            <person name="Ueda H.R."/>
            <person name="van Nimwegen E."/>
            <person name="Verardo R."/>
            <person name="Wei C.L."/>
            <person name="Yagi K."/>
            <person name="Yamanishi H."/>
            <person name="Zabarovsky E."/>
            <person name="Zhu S."/>
            <person name="Zimmer A."/>
            <person name="Hide W."/>
            <person name="Bult C."/>
            <person name="Grimmond S.M."/>
            <person name="Teasdale R.D."/>
            <person name="Liu E.T."/>
            <person name="Brusic V."/>
            <person name="Quackenbush J."/>
            <person name="Wahlestedt C."/>
            <person name="Mattick J.S."/>
            <person name="Hume D.A."/>
            <person name="Kai C."/>
            <person name="Sasaki D."/>
            <person name="Tomaru Y."/>
            <person name="Fukuda S."/>
            <person name="Kanamori-Katayama M."/>
            <person name="Suzuki M."/>
            <person name="Aoki J."/>
            <person name="Arakawa T."/>
            <person name="Iida J."/>
            <person name="Imamura K."/>
            <person name="Itoh M."/>
            <person name="Kato T."/>
            <person name="Kawaji H."/>
            <person name="Kawagashira N."/>
            <person name="Kawashima T."/>
            <person name="Kojima M."/>
            <person name="Kondo S."/>
            <person name="Konno H."/>
            <person name="Nakano K."/>
            <person name="Ninomiya N."/>
            <person name="Nishio T."/>
            <person name="Okada M."/>
            <person name="Plessy C."/>
            <person name="Shibata K."/>
            <person name="Shiraki T."/>
            <person name="Suzuki S."/>
            <person name="Tagami M."/>
            <person name="Waki K."/>
            <person name="Watahiki A."/>
            <person name="Okamura-Oho Y."/>
            <person name="Suzuki H."/>
            <person name="Kawai J."/>
            <person name="Hayashizaki Y."/>
        </authorList>
    </citation>
    <scope>NUCLEOTIDE SEQUENCE [LARGE SCALE MRNA] (ISOFORM 1)</scope>
    <source>
        <strain>C57BL/6J</strain>
        <tissue>Corpora quadrigemina</tissue>
    </source>
</reference>
<reference key="2">
    <citation type="journal article" date="2004" name="Genome Res.">
        <title>The status, quality, and expansion of the NIH full-length cDNA project: the Mammalian Gene Collection (MGC).</title>
        <authorList>
            <consortium name="The MGC Project Team"/>
        </authorList>
    </citation>
    <scope>NUCLEOTIDE SEQUENCE [LARGE SCALE MRNA] (ISOFORM 2)</scope>
    <source>
        <strain>FVB/N</strain>
        <tissue>Mammary gland</tissue>
    </source>
</reference>
<reference key="3">
    <citation type="journal article" date="2005" name="Genome Res.">
        <title>Identification of novel mammalian growth regulatory factors by genome-scale quantitative image analysis.</title>
        <authorList>
            <person name="Harada J.N."/>
            <person name="Bower K.E."/>
            <person name="Orth A.P."/>
            <person name="Callaway S."/>
            <person name="Nelson C.G."/>
            <person name="Laris C."/>
            <person name="Hogenesch J.B."/>
            <person name="Vogt P.K."/>
            <person name="Chanda S.K."/>
        </authorList>
    </citation>
    <scope>POSSIBLE FUNCTION</scope>
</reference>
<reference key="4">
    <citation type="journal article" date="2007" name="Proc. Natl. Acad. Sci. U.S.A.">
        <title>Large-scale phosphorylation analysis of mouse liver.</title>
        <authorList>
            <person name="Villen J."/>
            <person name="Beausoleil S.A."/>
            <person name="Gerber S.A."/>
            <person name="Gygi S.P."/>
        </authorList>
    </citation>
    <scope>IDENTIFICATION BY MASS SPECTROMETRY [LARGE SCALE ANALYSIS]</scope>
    <source>
        <tissue>Liver</tissue>
    </source>
</reference>
<reference key="5">
    <citation type="journal article" date="2010" name="Cell">
        <title>A tissue-specific atlas of mouse protein phosphorylation and expression.</title>
        <authorList>
            <person name="Huttlin E.L."/>
            <person name="Jedrychowski M.P."/>
            <person name="Elias J.E."/>
            <person name="Goswami T."/>
            <person name="Rad R."/>
            <person name="Beausoleil S.A."/>
            <person name="Villen J."/>
            <person name="Haas W."/>
            <person name="Sowa M.E."/>
            <person name="Gygi S.P."/>
        </authorList>
    </citation>
    <scope>PHOSPHORYLATION [LARGE SCALE ANALYSIS] AT SER-83; SER-86; SER-89; SER-92 AND THR-170</scope>
    <scope>IDENTIFICATION BY MASS SPECTROMETRY [LARGE SCALE ANALYSIS]</scope>
    <source>
        <tissue>Brown adipose tissue</tissue>
        <tissue>Heart</tissue>
        <tissue>Kidney</tissue>
        <tissue>Liver</tissue>
        <tissue>Lung</tissue>
        <tissue>Pancreas</tissue>
        <tissue>Spleen</tissue>
        <tissue>Testis</tissue>
    </source>
</reference>
<reference key="6">
    <citation type="journal article" date="2011" name="Nephron Exp. Nephrol.">
        <title>Expression of novel podocyte-associated proteins sult1b1 and ankrd25.</title>
        <authorList>
            <person name="Xu X."/>
            <person name="Patrakka J."/>
            <person name="Sistani L."/>
            <person name="Uhlen M."/>
            <person name="Jalanko H."/>
            <person name="Betsholtz C."/>
            <person name="Tryggvason K."/>
        </authorList>
    </citation>
    <scope>TISSUE SPECIFICITY</scope>
</reference>
<reference key="7">
    <citation type="journal article" date="2014" name="Mol. Cell. Proteomics">
        <title>Immunoaffinity enrichment and mass spectrometry analysis of protein methylation.</title>
        <authorList>
            <person name="Guo A."/>
            <person name="Gu H."/>
            <person name="Zhou J."/>
            <person name="Mulhern D."/>
            <person name="Wang Y."/>
            <person name="Lee K.A."/>
            <person name="Yang V."/>
            <person name="Aguiar M."/>
            <person name="Kornhauser J."/>
            <person name="Jia X."/>
            <person name="Ren J."/>
            <person name="Beausoleil S.A."/>
            <person name="Silva J.C."/>
            <person name="Vemulapalli V."/>
            <person name="Bedford M.T."/>
            <person name="Comb M.J."/>
        </authorList>
    </citation>
    <scope>METHYLATION [LARGE SCALE ANALYSIS] AT ARG-105</scope>
    <scope>IDENTIFICATION BY MASS SPECTROMETRY [LARGE SCALE ANALYSIS]</scope>
    <source>
        <tissue>Brain</tissue>
        <tissue>Embryo</tissue>
    </source>
</reference>
<reference key="8">
    <citation type="journal article" date="2015" name="J. Clin. Invest.">
        <title>KANK deficiency leads to podocyte dysfunction and nephrotic syndrome.</title>
        <authorList>
            <person name="Gee H.Y."/>
            <person name="Zhang F."/>
            <person name="Ashraf S."/>
            <person name="Kohl S."/>
            <person name="Sadowski C.E."/>
            <person name="Vega-Warner V."/>
            <person name="Zhou W."/>
            <person name="Lovric S."/>
            <person name="Fang H."/>
            <person name="Nettleton M."/>
            <person name="Zhu J.Y."/>
            <person name="Hoefele J."/>
            <person name="Weber L.T."/>
            <person name="Podracka L."/>
            <person name="Boor A."/>
            <person name="Fehrenbach H."/>
            <person name="Innis J.W."/>
            <person name="Washburn J."/>
            <person name="Levy S."/>
            <person name="Lifton R.P."/>
            <person name="Otto E.A."/>
            <person name="Han Z."/>
            <person name="Hildebrandt F."/>
        </authorList>
    </citation>
    <scope>FUNCTION</scope>
</reference>
<name>KANK2_MOUSE</name>
<feature type="chain" id="PRO_0000240841" description="KN motif and ankyrin repeat domain-containing protein 2">
    <location>
        <begin position="1"/>
        <end position="843"/>
    </location>
</feature>
<feature type="repeat" description="ANK 0; degenerate" evidence="2">
    <location>
        <begin position="606"/>
        <end position="643"/>
    </location>
</feature>
<feature type="repeat" description="ANK 1" evidence="3">
    <location>
        <begin position="673"/>
        <end position="703"/>
    </location>
</feature>
<feature type="repeat" description="ANK 2" evidence="3">
    <location>
        <begin position="707"/>
        <end position="740"/>
    </location>
</feature>
<feature type="repeat" description="ANK 3" evidence="3">
    <location>
        <begin position="745"/>
        <end position="774"/>
    </location>
</feature>
<feature type="repeat" description="ANK 4" evidence="3">
    <location>
        <begin position="778"/>
        <end position="808"/>
    </location>
</feature>
<feature type="repeat" description="ANK 5" evidence="3">
    <location>
        <begin position="812"/>
        <end position="842"/>
    </location>
</feature>
<feature type="region of interest" description="Interaction with AIFM1" evidence="1">
    <location>
        <begin position="1"/>
        <end position="72"/>
    </location>
</feature>
<feature type="region of interest" description="Disordered" evidence="4">
    <location>
        <begin position="1"/>
        <end position="31"/>
    </location>
</feature>
<feature type="region of interest" description="Disordered" evidence="4">
    <location>
        <begin position="161"/>
        <end position="182"/>
    </location>
</feature>
<feature type="region of interest" description="Disordered" evidence="4">
    <location>
        <begin position="410"/>
        <end position="577"/>
    </location>
</feature>
<feature type="region of interest" description="Interaction with NCOA1" evidence="1">
    <location>
        <begin position="661"/>
        <end position="827"/>
    </location>
</feature>
<feature type="coiled-coil region" evidence="3">
    <location>
        <begin position="183"/>
        <end position="234"/>
    </location>
</feature>
<feature type="coiled-coil region" evidence="3">
    <location>
        <begin position="282"/>
        <end position="313"/>
    </location>
</feature>
<feature type="compositionally biased region" description="Low complexity" evidence="4">
    <location>
        <begin position="457"/>
        <end position="470"/>
    </location>
</feature>
<feature type="compositionally biased region" description="Polar residues" evidence="4">
    <location>
        <begin position="547"/>
        <end position="561"/>
    </location>
</feature>
<feature type="modified residue" description="Phosphoserine" evidence="2">
    <location>
        <position position="19"/>
    </location>
</feature>
<feature type="modified residue" description="Phosphoserine" evidence="10">
    <location>
        <position position="83"/>
    </location>
</feature>
<feature type="modified residue" description="Phosphoserine" evidence="10">
    <location>
        <position position="86"/>
    </location>
</feature>
<feature type="modified residue" description="Phosphoserine" evidence="10">
    <location>
        <position position="89"/>
    </location>
</feature>
<feature type="modified residue" description="Phosphoserine" evidence="10">
    <location>
        <position position="92"/>
    </location>
</feature>
<feature type="modified residue" description="Omega-N-methylarginine" evidence="11">
    <location>
        <position position="105"/>
    </location>
</feature>
<feature type="modified residue" description="Phosphothreonine" evidence="10">
    <location>
        <position position="170"/>
    </location>
</feature>
<feature type="modified residue" description="Phosphothreonine" evidence="2">
    <location>
        <position position="331"/>
    </location>
</feature>
<feature type="modified residue" description="Phosphoserine" evidence="2">
    <location>
        <position position="358"/>
    </location>
</feature>
<feature type="modified residue" description="Phosphoserine" evidence="2">
    <location>
        <position position="532"/>
    </location>
</feature>
<feature type="splice variant" id="VSP_019430" description="In isoform 2." evidence="8">
    <original>MDLSPDLISACLALEKYLENPNALTERE</original>
    <variation>KWPIPQCFRSGCAWPAAVTHTLSLCGDI</variation>
    <location>
        <begin position="580"/>
        <end position="607"/>
    </location>
</feature>
<feature type="splice variant" id="VSP_019431" description="In isoform 2." evidence="8">
    <location>
        <begin position="608"/>
        <end position="843"/>
    </location>
</feature>
<feature type="sequence conflict" description="In Ref. 1; BAC32392." evidence="9" ref="1">
    <original>L</original>
    <variation>V</variation>
    <location>
        <position position="135"/>
    </location>
</feature>
<feature type="sequence conflict" description="In Ref. 2; AAH10245." evidence="9" ref="2">
    <original>A</original>
    <variation>V</variation>
    <location>
        <position position="139"/>
    </location>
</feature>
<keyword id="KW-0025">Alternative splicing</keyword>
<keyword id="KW-0040">ANK repeat</keyword>
<keyword id="KW-0053">Apoptosis</keyword>
<keyword id="KW-0175">Coiled coil</keyword>
<keyword id="KW-0963">Cytoplasm</keyword>
<keyword id="KW-0488">Methylation</keyword>
<keyword id="KW-0496">Mitochondrion</keyword>
<keyword id="KW-0597">Phosphoprotein</keyword>
<keyword id="KW-1185">Reference proteome</keyword>
<keyword id="KW-0677">Repeat</keyword>
<keyword id="KW-0804">Transcription</keyword>
<keyword id="KW-0805">Transcription regulation</keyword>
<organism>
    <name type="scientific">Mus musculus</name>
    <name type="common">Mouse</name>
    <dbReference type="NCBI Taxonomy" id="10090"/>
    <lineage>
        <taxon>Eukaryota</taxon>
        <taxon>Metazoa</taxon>
        <taxon>Chordata</taxon>
        <taxon>Craniata</taxon>
        <taxon>Vertebrata</taxon>
        <taxon>Euteleostomi</taxon>
        <taxon>Mammalia</taxon>
        <taxon>Eutheria</taxon>
        <taxon>Euarchontoglires</taxon>
        <taxon>Glires</taxon>
        <taxon>Rodentia</taxon>
        <taxon>Myomorpha</taxon>
        <taxon>Muroidea</taxon>
        <taxon>Muridae</taxon>
        <taxon>Murinae</taxon>
        <taxon>Mus</taxon>
        <taxon>Mus</taxon>
    </lineage>
</organism>
<proteinExistence type="evidence at protein level"/>
<evidence type="ECO:0000250" key="1"/>
<evidence type="ECO:0000250" key="2">
    <source>
        <dbReference type="UniProtKB" id="Q63ZY3"/>
    </source>
</evidence>
<evidence type="ECO:0000255" key="3"/>
<evidence type="ECO:0000256" key="4">
    <source>
        <dbReference type="SAM" id="MobiDB-lite"/>
    </source>
</evidence>
<evidence type="ECO:0000269" key="5">
    <source>
    </source>
</evidence>
<evidence type="ECO:0000269" key="6">
    <source>
    </source>
</evidence>
<evidence type="ECO:0000269" key="7">
    <source>
    </source>
</evidence>
<evidence type="ECO:0000303" key="8">
    <source>
    </source>
</evidence>
<evidence type="ECO:0000305" key="9"/>
<evidence type="ECO:0007744" key="10">
    <source>
    </source>
</evidence>
<evidence type="ECO:0007744" key="11">
    <source>
    </source>
</evidence>
<gene>
    <name type="primary">Kank2</name>
    <name type="synonym">Ankrd25</name>
</gene>
<comment type="function">
    <text evidence="2 5 7">Involved in transcription regulation by sequestering in the cytoplasm nuclear receptor coactivators such as NCOA1, NCOA2 and NCOA3 (By similarity). Involved in regulation of caspase-independent apoptosis by sequestering the proapoptotic factor AIFM1 in mitochondria (By similarity). Pro-apoptotic stimuli can induce its proteasomal degradation allowing the translocation of AIFM1 to the nucleus to induce apoptosis (By similarity). Involved in the negative control of vitamin D receptor signaling pathway (By similarity). Involved in actin stress fibers formation through its interaction with ARHGDIA and the regulation of the Rho signaling pathway (PubMed:25961457). May thereby play a role in cell adhesion and migration, regulating for instance podocytes migration during development of the kidney (PubMed:25961457). Through the Rho signaling pathway may also regulate cell proliferation (PubMed:16024821).</text>
</comment>
<comment type="subunit">
    <text evidence="2">Interacts (non-phosphorylated form) with NCOA1; NCOA2 AND NCOA3 (By similarity). Interacts with AIFM1 (By similarity). Interacts with ARHGDIA; the interaction is direct and may regulate the interaction of ARHGDIA with RHOA, RAC1 and CDC42 (By similarity). Interacts (via ANK repeats 1-5) with KIF21A (via residues 1148-1169) (By similarity).</text>
</comment>
<comment type="subcellular location">
    <subcellularLocation>
        <location evidence="2">Cytoplasm</location>
    </subcellularLocation>
    <subcellularLocation>
        <location evidence="2">Mitochondrion</location>
    </subcellularLocation>
</comment>
<comment type="alternative products">
    <event type="alternative splicing"/>
    <isoform>
        <id>Q8BX02-1</id>
        <name>1</name>
        <sequence type="displayed"/>
    </isoform>
    <isoform>
        <id>Q8BX02-2</id>
        <name>2</name>
        <sequence type="described" ref="VSP_019430 VSP_019431"/>
    </isoform>
</comment>
<comment type="tissue specificity">
    <text evidence="6">Widely expressed with highest levels in liver and skeletal muscle.</text>
</comment>
<comment type="PTM">
    <text evidence="2">Phosphorylated by casein kinase II upon estrogen stimulation (By similarity). Phosphorylation induces the release by KANK2 of NCOA1 and its translocation to the nucleus where NCOA1 can activate gene transcription (By similarity).</text>
</comment>
<dbReference type="EMBL" id="AK045492">
    <property type="protein sequence ID" value="BAC32392.1"/>
    <property type="molecule type" value="mRNA"/>
</dbReference>
<dbReference type="EMBL" id="AK049288">
    <property type="protein sequence ID" value="BAC33660.1"/>
    <property type="molecule type" value="mRNA"/>
</dbReference>
<dbReference type="EMBL" id="BC010245">
    <property type="protein sequence ID" value="AAH10245.1"/>
    <property type="molecule type" value="mRNA"/>
</dbReference>
<dbReference type="CCDS" id="CCDS22911.1">
    <molecule id="Q8BX02-1"/>
</dbReference>
<dbReference type="RefSeq" id="NP_663586.3">
    <molecule id="Q8BX02-1"/>
    <property type="nucleotide sequence ID" value="NM_145611.4"/>
</dbReference>
<dbReference type="SMR" id="Q8BX02"/>
<dbReference type="BioGRID" id="231612">
    <property type="interactions" value="8"/>
</dbReference>
<dbReference type="FunCoup" id="Q8BX02">
    <property type="interactions" value="1818"/>
</dbReference>
<dbReference type="IntAct" id="Q8BX02">
    <property type="interactions" value="3"/>
</dbReference>
<dbReference type="STRING" id="10090.ENSMUSP00000034717"/>
<dbReference type="GlyGen" id="Q8BX02">
    <property type="glycosylation" value="2 sites, 1 O-linked glycan (1 site)"/>
</dbReference>
<dbReference type="iPTMnet" id="Q8BX02"/>
<dbReference type="PhosphoSitePlus" id="Q8BX02"/>
<dbReference type="SwissPalm" id="Q8BX02"/>
<dbReference type="jPOST" id="Q8BX02"/>
<dbReference type="PaxDb" id="10090-ENSMUSP00000034717"/>
<dbReference type="PeptideAtlas" id="Q8BX02"/>
<dbReference type="ProteomicsDB" id="269058">
    <molecule id="Q8BX02-1"/>
</dbReference>
<dbReference type="ProteomicsDB" id="269059">
    <molecule id="Q8BX02-2"/>
</dbReference>
<dbReference type="Pumba" id="Q8BX02"/>
<dbReference type="Antibodypedia" id="2885">
    <property type="antibodies" value="195 antibodies from 29 providers"/>
</dbReference>
<dbReference type="DNASU" id="235041"/>
<dbReference type="Ensembl" id="ENSMUST00000034717.7">
    <molecule id="Q8BX02-1"/>
    <property type="protein sequence ID" value="ENSMUSP00000034717.6"/>
    <property type="gene ID" value="ENSMUSG00000032194.10"/>
</dbReference>
<dbReference type="Ensembl" id="ENSMUST00000216008.2">
    <molecule id="Q8BX02-2"/>
    <property type="protein sequence ID" value="ENSMUSP00000151181.2"/>
    <property type="gene ID" value="ENSMUSG00000032194.10"/>
</dbReference>
<dbReference type="GeneID" id="235041"/>
<dbReference type="KEGG" id="mmu:235041"/>
<dbReference type="UCSC" id="uc009omm.2">
    <molecule id="Q8BX02-1"/>
    <property type="organism name" value="mouse"/>
</dbReference>
<dbReference type="AGR" id="MGI:2384568"/>
<dbReference type="CTD" id="25959"/>
<dbReference type="MGI" id="MGI:2384568">
    <property type="gene designation" value="Kank2"/>
</dbReference>
<dbReference type="VEuPathDB" id="HostDB:ENSMUSG00000032194"/>
<dbReference type="eggNOG" id="KOG0514">
    <property type="taxonomic scope" value="Eukaryota"/>
</dbReference>
<dbReference type="GeneTree" id="ENSGT00940000161012"/>
<dbReference type="HOGENOM" id="CLU_004269_2_0_1"/>
<dbReference type="InParanoid" id="Q8BX02"/>
<dbReference type="OMA" id="DTVVQKC"/>
<dbReference type="OrthoDB" id="5406014at2759"/>
<dbReference type="PhylomeDB" id="Q8BX02"/>
<dbReference type="TreeFam" id="TF324499"/>
<dbReference type="BioGRID-ORCS" id="235041">
    <property type="hits" value="0 hits in 77 CRISPR screens"/>
</dbReference>
<dbReference type="ChiTaRS" id="Kank2">
    <property type="organism name" value="mouse"/>
</dbReference>
<dbReference type="PRO" id="PR:Q8BX02"/>
<dbReference type="Proteomes" id="UP000000589">
    <property type="component" value="Chromosome 9"/>
</dbReference>
<dbReference type="RNAct" id="Q8BX02">
    <property type="molecule type" value="protein"/>
</dbReference>
<dbReference type="Bgee" id="ENSMUSG00000032194">
    <property type="expression patterns" value="Expressed in ascending aorta and 218 other cell types or tissues"/>
</dbReference>
<dbReference type="ExpressionAtlas" id="Q8BX02">
    <property type="expression patterns" value="baseline and differential"/>
</dbReference>
<dbReference type="GO" id="GO:0005737">
    <property type="term" value="C:cytoplasm"/>
    <property type="evidence" value="ECO:0000250"/>
    <property type="project" value="UniProtKB"/>
</dbReference>
<dbReference type="GO" id="GO:0005739">
    <property type="term" value="C:mitochondrion"/>
    <property type="evidence" value="ECO:0000250"/>
    <property type="project" value="UniProtKB"/>
</dbReference>
<dbReference type="GO" id="GO:0006915">
    <property type="term" value="P:apoptotic process"/>
    <property type="evidence" value="ECO:0007669"/>
    <property type="project" value="UniProtKB-KW"/>
</dbReference>
<dbReference type="GO" id="GO:0072073">
    <property type="term" value="P:kidney epithelium development"/>
    <property type="evidence" value="ECO:0000250"/>
    <property type="project" value="UniProtKB"/>
</dbReference>
<dbReference type="GO" id="GO:0030837">
    <property type="term" value="P:negative regulation of actin filament polymerization"/>
    <property type="evidence" value="ECO:0007669"/>
    <property type="project" value="InterPro"/>
</dbReference>
<dbReference type="GO" id="GO:0008285">
    <property type="term" value="P:negative regulation of cell population proliferation"/>
    <property type="evidence" value="ECO:0000250"/>
    <property type="project" value="UniProtKB"/>
</dbReference>
<dbReference type="GO" id="GO:2000134">
    <property type="term" value="P:negative regulation of G1/S transition of mitotic cell cycle"/>
    <property type="evidence" value="ECO:0000250"/>
    <property type="project" value="UniProtKB"/>
</dbReference>
<dbReference type="GO" id="GO:0033147">
    <property type="term" value="P:negative regulation of intracellular estrogen receptor signaling pathway"/>
    <property type="evidence" value="ECO:0000250"/>
    <property type="project" value="UniProtKB"/>
</dbReference>
<dbReference type="GO" id="GO:0043069">
    <property type="term" value="P:negative regulation of programmed cell death"/>
    <property type="evidence" value="ECO:0000250"/>
    <property type="project" value="UniProtKB"/>
</dbReference>
<dbReference type="GO" id="GO:0051497">
    <property type="term" value="P:negative regulation of stress fiber assembly"/>
    <property type="evidence" value="ECO:0000266"/>
    <property type="project" value="MGI"/>
</dbReference>
<dbReference type="GO" id="GO:0000122">
    <property type="term" value="P:negative regulation of transcription by RNA polymerase II"/>
    <property type="evidence" value="ECO:0000250"/>
    <property type="project" value="UniProtKB"/>
</dbReference>
<dbReference type="GO" id="GO:0070563">
    <property type="term" value="P:negative regulation of vitamin D receptor signaling pathway"/>
    <property type="evidence" value="ECO:0000250"/>
    <property type="project" value="UniProtKB"/>
</dbReference>
<dbReference type="GO" id="GO:0090521">
    <property type="term" value="P:podocyte cell migration"/>
    <property type="evidence" value="ECO:0000315"/>
    <property type="project" value="UniProtKB"/>
</dbReference>
<dbReference type="GO" id="GO:0035023">
    <property type="term" value="P:regulation of Rho protein signal transduction"/>
    <property type="evidence" value="ECO:0000315"/>
    <property type="project" value="UniProtKB"/>
</dbReference>
<dbReference type="FunFam" id="1.25.40.20:FF:000017">
    <property type="entry name" value="KN motif and ankyrin repeat domain-containing protein 1"/>
    <property type="match status" value="1"/>
</dbReference>
<dbReference type="Gene3D" id="1.25.40.20">
    <property type="entry name" value="Ankyrin repeat-containing domain"/>
    <property type="match status" value="1"/>
</dbReference>
<dbReference type="InterPro" id="IPR002110">
    <property type="entry name" value="Ankyrin_rpt"/>
</dbReference>
<dbReference type="InterPro" id="IPR036770">
    <property type="entry name" value="Ankyrin_rpt-contain_sf"/>
</dbReference>
<dbReference type="InterPro" id="IPR047184">
    <property type="entry name" value="KANK1-4"/>
</dbReference>
<dbReference type="InterPro" id="IPR021939">
    <property type="entry name" value="KN_motif"/>
</dbReference>
<dbReference type="PANTHER" id="PTHR24168">
    <property type="entry name" value="KN MOTIF AND ANKYRIN REPEAT DOMAIN-CONTAINING"/>
    <property type="match status" value="1"/>
</dbReference>
<dbReference type="PANTHER" id="PTHR24168:SF0">
    <property type="entry name" value="KN MOTIF AND ANKYRIN REPEAT DOMAIN-CONTAINING PROTEIN 2"/>
    <property type="match status" value="1"/>
</dbReference>
<dbReference type="Pfam" id="PF00023">
    <property type="entry name" value="Ank"/>
    <property type="match status" value="1"/>
</dbReference>
<dbReference type="Pfam" id="PF12796">
    <property type="entry name" value="Ank_2"/>
    <property type="match status" value="1"/>
</dbReference>
<dbReference type="Pfam" id="PF12075">
    <property type="entry name" value="KN_motif"/>
    <property type="match status" value="1"/>
</dbReference>
<dbReference type="SMART" id="SM00248">
    <property type="entry name" value="ANK"/>
    <property type="match status" value="5"/>
</dbReference>
<dbReference type="SUPFAM" id="SSF48403">
    <property type="entry name" value="Ankyrin repeat"/>
    <property type="match status" value="1"/>
</dbReference>
<dbReference type="PROSITE" id="PS50297">
    <property type="entry name" value="ANK_REP_REGION"/>
    <property type="match status" value="1"/>
</dbReference>
<dbReference type="PROSITE" id="PS50088">
    <property type="entry name" value="ANK_REPEAT"/>
    <property type="match status" value="2"/>
</dbReference>
<accession>Q8BX02</accession>
<accession>Q8BLD5</accession>
<accession>Q91Z35</accession>